<feature type="chain" id="PRO_0000249487" description="Centromere protein L">
    <location>
        <begin position="1"/>
        <end position="367"/>
    </location>
</feature>
<feature type="sequence conflict" description="In Ref. 2; AAH95551." evidence="2" ref="2">
    <original>F</original>
    <variation>S</variation>
    <location>
        <position position="224"/>
    </location>
</feature>
<feature type="sequence conflict" description="In Ref. 2; AAH95551." evidence="2" ref="2">
    <original>S</original>
    <variation>P</variation>
    <location>
        <position position="230"/>
    </location>
</feature>
<feature type="sequence conflict" description="In Ref. 2; AAH95551." evidence="2" ref="2">
    <original>Q</original>
    <variation>E</variation>
    <location>
        <position position="290"/>
    </location>
</feature>
<proteinExistence type="evidence at transcript level"/>
<evidence type="ECO:0000250" key="1"/>
<evidence type="ECO:0000305" key="2"/>
<keyword id="KW-0137">Centromere</keyword>
<keyword id="KW-0158">Chromosome</keyword>
<keyword id="KW-0539">Nucleus</keyword>
<keyword id="KW-1185">Reference proteome</keyword>
<dbReference type="EMBL" id="AY648825">
    <property type="protein sequence ID" value="AAT68143.1"/>
    <property type="molecule type" value="mRNA"/>
</dbReference>
<dbReference type="EMBL" id="BC095551">
    <property type="protein sequence ID" value="AAH95551.1"/>
    <property type="status" value="ALT_FRAME"/>
    <property type="molecule type" value="mRNA"/>
</dbReference>
<dbReference type="SMR" id="Q6DRD4"/>
<dbReference type="FunCoup" id="Q6DRD4">
    <property type="interactions" value="2223"/>
</dbReference>
<dbReference type="STRING" id="7955.ENSDARP00000056666"/>
<dbReference type="PaxDb" id="7955-ENSDARP00000056666"/>
<dbReference type="AGR" id="ZFIN:ZDB-GENE-040930-6"/>
<dbReference type="ZFIN" id="ZDB-GENE-040930-6">
    <property type="gene designation" value="cenpl"/>
</dbReference>
<dbReference type="eggNOG" id="ENOG502QS38">
    <property type="taxonomic scope" value="Eukaryota"/>
</dbReference>
<dbReference type="InParanoid" id="Q6DRD4"/>
<dbReference type="PhylomeDB" id="Q6DRD4"/>
<dbReference type="PRO" id="PR:Q6DRD4"/>
<dbReference type="Proteomes" id="UP000000437">
    <property type="component" value="Unplaced"/>
</dbReference>
<dbReference type="GO" id="GO:0000775">
    <property type="term" value="C:chromosome, centromeric region"/>
    <property type="evidence" value="ECO:0007669"/>
    <property type="project" value="UniProtKB-SubCell"/>
</dbReference>
<dbReference type="GO" id="GO:0005634">
    <property type="term" value="C:nucleus"/>
    <property type="evidence" value="ECO:0007669"/>
    <property type="project" value="UniProtKB-SubCell"/>
</dbReference>
<dbReference type="InterPro" id="IPR025204">
    <property type="entry name" value="CENP-L"/>
</dbReference>
<dbReference type="PANTHER" id="PTHR31740">
    <property type="entry name" value="CENTROMERE PROTEIN L"/>
    <property type="match status" value="1"/>
</dbReference>
<dbReference type="PANTHER" id="PTHR31740:SF2">
    <property type="entry name" value="CENTROMERE PROTEIN L"/>
    <property type="match status" value="1"/>
</dbReference>
<dbReference type="Pfam" id="PF13092">
    <property type="entry name" value="CENP-L"/>
    <property type="match status" value="1"/>
</dbReference>
<protein>
    <recommendedName>
        <fullName>Centromere protein L</fullName>
        <shortName>CENP-L</shortName>
    </recommendedName>
</protein>
<comment type="function">
    <text evidence="1">Probable component of a centromeric complex involved in assembly of kinetochore proteins, mitotic progression and chromosome segregation.</text>
</comment>
<comment type="subcellular location">
    <subcellularLocation>
        <location evidence="1">Nucleus</location>
    </subcellularLocation>
    <subcellularLocation>
        <location evidence="1">Chromosome</location>
        <location evidence="1">Centromere</location>
    </subcellularLocation>
    <text evidence="1">Localizes exclusively in the centromeres.</text>
</comment>
<comment type="similarity">
    <text evidence="2">Belongs to the CENP-L/IML3 family.</text>
</comment>
<comment type="sequence caution" evidence="2">
    <conflict type="frameshift">
        <sequence resource="EMBL-CDS" id="AAH95551"/>
    </conflict>
</comment>
<organism>
    <name type="scientific">Danio rerio</name>
    <name type="common">Zebrafish</name>
    <name type="synonym">Brachydanio rerio</name>
    <dbReference type="NCBI Taxonomy" id="7955"/>
    <lineage>
        <taxon>Eukaryota</taxon>
        <taxon>Metazoa</taxon>
        <taxon>Chordata</taxon>
        <taxon>Craniata</taxon>
        <taxon>Vertebrata</taxon>
        <taxon>Euteleostomi</taxon>
        <taxon>Actinopterygii</taxon>
        <taxon>Neopterygii</taxon>
        <taxon>Teleostei</taxon>
        <taxon>Ostariophysi</taxon>
        <taxon>Cypriniformes</taxon>
        <taxon>Danionidae</taxon>
        <taxon>Danioninae</taxon>
        <taxon>Danio</taxon>
    </lineage>
</organism>
<name>CENPL_DANRE</name>
<gene>
    <name type="primary">cenpl</name>
</gene>
<sequence>MFNLLPAFSLGVLLIVMEGRGSAVNTPASRPVTRKSKSYGRSCVEAPSYFWQTPGHLTVLKVPTSRGAAKSQIITNKVDPEHIALLVKNEWKLSYVTPLHHFRHTQLKSYAKHLSAFIVAEKQQGVAVEVGLDAGFKVTFTAVLGLAETDEDAETVFIQIQSKPVFAAAADAPKVVWRGWLTCVNGDPEYLRSLPPDFVSLPLFCTSGPESLTNLVKSWFERAFDCNFGSLALNSSTLNWLAALWTGCHPACNIRYLKLSWSLPTEPPLDVLYTVNPQDAWELWNSIHPQENTDDRIDIKDVQAFMSGMETHFFRHFKIHLSAGTLLKVSTALGSAHHDGKIKIGNSDYITTLLALLTECALLKMPT</sequence>
<accession>Q6DRD4</accession>
<accession>Q502U4</accession>
<reference key="1">
    <citation type="journal article" date="2004" name="Proc. Natl. Acad. Sci. U.S.A.">
        <title>Identification of 315 genes essential for early zebrafish development.</title>
        <authorList>
            <person name="Amsterdam A."/>
            <person name="Nissen R.M."/>
            <person name="Sun Z."/>
            <person name="Swindell E.C."/>
            <person name="Farrington S."/>
            <person name="Hopkins N."/>
        </authorList>
    </citation>
    <scope>NUCLEOTIDE SEQUENCE [LARGE SCALE MRNA]</scope>
    <source>
        <tissue>Embryo</tissue>
    </source>
</reference>
<reference key="2">
    <citation type="submission" date="2005-05" db="EMBL/GenBank/DDBJ databases">
        <authorList>
            <consortium name="NIH - Zebrafish Gene Collection (ZGC) project"/>
        </authorList>
    </citation>
    <scope>NUCLEOTIDE SEQUENCE [LARGE SCALE MRNA]</scope>
    <source>
        <tissue>Testis</tissue>
    </source>
</reference>